<name>AQP2_LACBS</name>
<feature type="chain" id="PRO_0000457453" description="Aquaporin Lacbi1:233199">
    <location>
        <begin position="1"/>
        <end position="263"/>
    </location>
</feature>
<feature type="topological domain" description="Cytoplasmic" evidence="4">
    <location>
        <begin position="1"/>
        <end position="17"/>
    </location>
</feature>
<feature type="transmembrane region" description="Helical" evidence="1">
    <location>
        <begin position="18"/>
        <end position="38"/>
    </location>
</feature>
<feature type="topological domain" description="Extracellular" evidence="4">
    <location>
        <begin position="39"/>
        <end position="44"/>
    </location>
</feature>
<feature type="transmembrane region" description="Helical" evidence="1">
    <location>
        <begin position="45"/>
        <end position="65"/>
    </location>
</feature>
<feature type="topological domain" description="Cytoplasmic" evidence="4">
    <location>
        <begin position="66"/>
        <end position="88"/>
    </location>
</feature>
<feature type="transmembrane region" description="Helical" evidence="1">
    <location>
        <begin position="89"/>
        <end position="109"/>
    </location>
</feature>
<feature type="topological domain" description="Extracellular" evidence="4">
    <location>
        <begin position="110"/>
        <end position="143"/>
    </location>
</feature>
<feature type="transmembrane region" description="Helical" evidence="1">
    <location>
        <begin position="144"/>
        <end position="164"/>
    </location>
</feature>
<feature type="topological domain" description="Cytoplasmic" evidence="4">
    <location>
        <begin position="165"/>
        <end position="174"/>
    </location>
</feature>
<feature type="transmembrane region" description="Helical" evidence="1">
    <location>
        <begin position="175"/>
        <end position="195"/>
    </location>
</feature>
<feature type="topological domain" description="Extracellular" evidence="4">
    <location>
        <begin position="196"/>
        <end position="227"/>
    </location>
</feature>
<feature type="transmembrane region" description="Helical" evidence="1">
    <location>
        <begin position="228"/>
        <end position="248"/>
    </location>
</feature>
<feature type="topological domain" description="Cytoplasmic" evidence="4">
    <location>
        <begin position="249"/>
        <end position="263"/>
    </location>
</feature>
<feature type="short sequence motif" description="NPA 1" evidence="4">
    <location>
        <begin position="71"/>
        <end position="73"/>
    </location>
</feature>
<feature type="short sequence motif" description="NPA 2" evidence="4">
    <location>
        <begin position="201"/>
        <end position="203"/>
    </location>
</feature>
<keyword id="KW-0472">Membrane</keyword>
<keyword id="KW-1185">Reference proteome</keyword>
<keyword id="KW-0677">Repeat</keyword>
<keyword id="KW-0812">Transmembrane</keyword>
<keyword id="KW-1133">Transmembrane helix</keyword>
<keyword id="KW-0813">Transport</keyword>
<dbReference type="EMBL" id="DS547097">
    <property type="protein sequence ID" value="EDR10356.1"/>
    <property type="molecule type" value="Genomic_DNA"/>
</dbReference>
<dbReference type="RefSeq" id="XP_001878806.1">
    <property type="nucleotide sequence ID" value="XM_001878771.1"/>
</dbReference>
<dbReference type="SMR" id="B0D4K0"/>
<dbReference type="FunCoup" id="B0D4K0">
    <property type="interactions" value="60"/>
</dbReference>
<dbReference type="STRING" id="486041.B0D4K0"/>
<dbReference type="GeneID" id="6074358"/>
<dbReference type="KEGG" id="lbc:LACBIDRAFT_233199"/>
<dbReference type="HOGENOM" id="CLU_020019_9_0_1"/>
<dbReference type="InParanoid" id="B0D4K0"/>
<dbReference type="OrthoDB" id="3222at2759"/>
<dbReference type="Proteomes" id="UP000001194">
    <property type="component" value="Unassembled WGS sequence"/>
</dbReference>
<dbReference type="GO" id="GO:0005886">
    <property type="term" value="C:plasma membrane"/>
    <property type="evidence" value="ECO:0007669"/>
    <property type="project" value="TreeGrafter"/>
</dbReference>
<dbReference type="GO" id="GO:0015254">
    <property type="term" value="F:glycerol channel activity"/>
    <property type="evidence" value="ECO:0007669"/>
    <property type="project" value="TreeGrafter"/>
</dbReference>
<dbReference type="GO" id="GO:0015250">
    <property type="term" value="F:water channel activity"/>
    <property type="evidence" value="ECO:0007669"/>
    <property type="project" value="TreeGrafter"/>
</dbReference>
<dbReference type="CDD" id="cd00333">
    <property type="entry name" value="MIP"/>
    <property type="match status" value="1"/>
</dbReference>
<dbReference type="FunFam" id="1.20.1080.10:FF:000027">
    <property type="entry name" value="MIP aquaporin"/>
    <property type="match status" value="1"/>
</dbReference>
<dbReference type="Gene3D" id="1.20.1080.10">
    <property type="entry name" value="Glycerol uptake facilitator protein"/>
    <property type="match status" value="1"/>
</dbReference>
<dbReference type="InterPro" id="IPR023271">
    <property type="entry name" value="Aquaporin-like"/>
</dbReference>
<dbReference type="InterPro" id="IPR000425">
    <property type="entry name" value="MIP"/>
</dbReference>
<dbReference type="InterPro" id="IPR050363">
    <property type="entry name" value="MIP/Aquaporin"/>
</dbReference>
<dbReference type="InterPro" id="IPR022357">
    <property type="entry name" value="MIP_CS"/>
</dbReference>
<dbReference type="NCBIfam" id="TIGR00861">
    <property type="entry name" value="MIP"/>
    <property type="match status" value="1"/>
</dbReference>
<dbReference type="PANTHER" id="PTHR43829">
    <property type="entry name" value="AQUAPORIN OR AQUAGLYCEROPORIN RELATED"/>
    <property type="match status" value="1"/>
</dbReference>
<dbReference type="PANTHER" id="PTHR43829:SF9">
    <property type="entry name" value="AQUAPORIN-9"/>
    <property type="match status" value="1"/>
</dbReference>
<dbReference type="Pfam" id="PF00230">
    <property type="entry name" value="MIP"/>
    <property type="match status" value="1"/>
</dbReference>
<dbReference type="PRINTS" id="PR02019">
    <property type="entry name" value="AQUAPORIN7"/>
</dbReference>
<dbReference type="PRINTS" id="PR00783">
    <property type="entry name" value="MINTRINSICP"/>
</dbReference>
<dbReference type="SUPFAM" id="SSF81338">
    <property type="entry name" value="Aquaporin-like"/>
    <property type="match status" value="1"/>
</dbReference>
<dbReference type="PROSITE" id="PS00221">
    <property type="entry name" value="MIP"/>
    <property type="match status" value="1"/>
</dbReference>
<comment type="function">
    <text evidence="4">Probable water channel required to facilitate the transport of water across membranes.</text>
</comment>
<comment type="catalytic activity">
    <reaction evidence="4">
        <text>H2O(in) = H2O(out)</text>
        <dbReference type="Rhea" id="RHEA:29667"/>
        <dbReference type="ChEBI" id="CHEBI:15377"/>
    </reaction>
</comment>
<comment type="subcellular location">
    <subcellularLocation>
        <location evidence="1">Membrane</location>
        <topology evidence="1">Multi-pass membrane protein</topology>
    </subcellularLocation>
</comment>
<comment type="domain">
    <text evidence="4">Aquaporins contain two tandem repeats each containing three membrane-spanning domains and a pore-forming loop with the signature motif Asn-Pro-Ala (NPA).</text>
</comment>
<comment type="similarity">
    <text evidence="3">Belongs to the MIP/aquaporin (TC 1.A.8) family.</text>
</comment>
<proteinExistence type="inferred from homology"/>
<evidence type="ECO:0000255" key="1"/>
<evidence type="ECO:0000303" key="2">
    <source>
    </source>
</evidence>
<evidence type="ECO:0000305" key="3"/>
<evidence type="ECO:0000305" key="4">
    <source>
    </source>
</evidence>
<sequence>MFTLAHHRHAIRKPMAEFFGVALLVIFGAGAACQVVLSTNPNSFLSINFGWAIGIAMGAWISGSISGGHINPAITIAMATYRGFPWREVPSYILAQVLGGVVGAALVYANYIHAIDVFEGGRHIRTQATASLFATYALPYMTQVSCFFSEFLATAVLAMMVLALTDNRNGAPTNGLSPFALFVLFIGLGASLGMETAYALNPARDFGPRLFLAMAGYGKALFNYRSQYWLWAPIIAPVLGAQAGGLLYDTFLYDGDDSPIKWR</sequence>
<organism>
    <name type="scientific">Laccaria bicolor (strain S238N-H82 / ATCC MYA-4686)</name>
    <name type="common">Bicoloured deceiver</name>
    <name type="synonym">Laccaria laccata var. bicolor</name>
    <dbReference type="NCBI Taxonomy" id="486041"/>
    <lineage>
        <taxon>Eukaryota</taxon>
        <taxon>Fungi</taxon>
        <taxon>Dikarya</taxon>
        <taxon>Basidiomycota</taxon>
        <taxon>Agaricomycotina</taxon>
        <taxon>Agaricomycetes</taxon>
        <taxon>Agaricomycetidae</taxon>
        <taxon>Agaricales</taxon>
        <taxon>Agaricineae</taxon>
        <taxon>Hydnangiaceae</taxon>
        <taxon>Laccaria</taxon>
    </lineage>
</organism>
<gene>
    <name type="ORF">Lacbi1:233199</name>
    <name type="ORF">LACBIDRAFT_233199</name>
</gene>
<accession>B0D4K0</accession>
<reference key="1">
    <citation type="journal article" date="2008" name="Nature">
        <title>The genome of Laccaria bicolor provides insights into mycorrhizal symbiosis.</title>
        <authorList>
            <person name="Martin F."/>
            <person name="Aerts A."/>
            <person name="Ahren D."/>
            <person name="Brun A."/>
            <person name="Danchin E.G.J."/>
            <person name="Duchaussoy F."/>
            <person name="Gibon J."/>
            <person name="Kohler A."/>
            <person name="Lindquist E."/>
            <person name="Pereda V."/>
            <person name="Salamov A."/>
            <person name="Shapiro H.J."/>
            <person name="Wuyts J."/>
            <person name="Blaudez D."/>
            <person name="Buee M."/>
            <person name="Brokstein P."/>
            <person name="Canbaeck B."/>
            <person name="Cohen D."/>
            <person name="Courty P.E."/>
            <person name="Coutinho P.M."/>
            <person name="Delaruelle C."/>
            <person name="Detter J.C."/>
            <person name="Deveau A."/>
            <person name="DiFazio S."/>
            <person name="Duplessis S."/>
            <person name="Fraissinet-Tachet L."/>
            <person name="Lucic E."/>
            <person name="Frey-Klett P."/>
            <person name="Fourrey C."/>
            <person name="Feussner I."/>
            <person name="Gay G."/>
            <person name="Grimwood J."/>
            <person name="Hoegger P.J."/>
            <person name="Jain P."/>
            <person name="Kilaru S."/>
            <person name="Labbe J."/>
            <person name="Lin Y.C."/>
            <person name="Legue V."/>
            <person name="Le Tacon F."/>
            <person name="Marmeisse R."/>
            <person name="Melayah D."/>
            <person name="Montanini B."/>
            <person name="Muratet M."/>
            <person name="Nehls U."/>
            <person name="Niculita-Hirzel H."/>
            <person name="Oudot-Le Secq M.P."/>
            <person name="Peter M."/>
            <person name="Quesneville H."/>
            <person name="Rajashekar B."/>
            <person name="Reich M."/>
            <person name="Rouhier N."/>
            <person name="Schmutz J."/>
            <person name="Yin T."/>
            <person name="Chalot M."/>
            <person name="Henrissat B."/>
            <person name="Kuees U."/>
            <person name="Lucas S."/>
            <person name="Van de Peer Y."/>
            <person name="Podila G.K."/>
            <person name="Polle A."/>
            <person name="Pukkila P.J."/>
            <person name="Richardson P.M."/>
            <person name="Rouze P."/>
            <person name="Sanders I.R."/>
            <person name="Stajich J.E."/>
            <person name="Tunlid A."/>
            <person name="Tuskan G."/>
            <person name="Grigoriev I.V."/>
        </authorList>
    </citation>
    <scope>NUCLEOTIDE SEQUENCE [LARGE SCALE GENOMIC DNA]</scope>
    <source>
        <strain>S238N-H82 / ATCC MYA-4686</strain>
    </source>
</reference>
<reference key="2">
    <citation type="journal article" date="2011" name="New Phytol.">
        <title>The aquaporin gene family of the ectomycorrhizal fungus Laccaria bicolor: lessons for symbiotic functions.</title>
        <authorList>
            <person name="Dietz S."/>
            <person name="von Buelow J."/>
            <person name="Beitz E."/>
            <person name="Nehls U."/>
        </authorList>
    </citation>
    <scope>IDENTIFICATION</scope>
</reference>
<protein>
    <recommendedName>
        <fullName evidence="2">Aquaporin Lacbi1:233199</fullName>
    </recommendedName>
</protein>